<sequence length="609" mass="70945">MVSILSNIGMMVVTFKRPSLFTSLRRRSANNIIITKHSHPISTTRRSGNYKPTMWDFQFIQSLHNPYEGDKYMKRLNKLKKEVKKMMMTVEGSHDEELEKLELIDNLERLGVSYHFKDEIMQIMRSINININIAPPDSLYTTALKFRLLRQHGFHISQDILNDFKDENGNLKQSICKDTKDILNSSKDEHDNLKQSTCNNTKGLLKLYEASFLSIENESFLRNTTKSTLAHLMRYVDQNRCGEEDNMIVELVVHALELPRHWMVPRLETRWYISIYERMSNANPLLLELAKLDFNIVQATHQQDLRILSRWWKNTGLAEKLPFSRDILVENMFWAVGALFEPQHSYFRRLITKVIVFISIIDDIYDVYGTLDELELFTLAIQRWDTKAMEQLPDYMKVCYLALINIINEVAYEVLKNHDINVLPYLTKSWADLCKSYLQEAKWYHNGYKPNLEEYMDNARISIGVPMVLVHSLFLVTNQITKEALDSLTNYPDIIRWSATIFRLNDDLGTSSDELKRGDVSKSIQCYMNEKGASEEEAIEHIEFLIQETWEAMNTAQSKNSPLSETFIEVAKNITKASHFMYLHSDVKSSISKILFEPIIISNVAFALK</sequence>
<comment type="function">
    <text evidence="4">Involved in monoterpene (C10) biosynthesis in glandular trichomes (PubMed:17440821). Converts geranyl diphosphate to linalool in glandular trichomes in response to jasmonate (JA) (PubMed:17440821). Can convert farnesyl diphosphate to nerolidol in vitro (PubMed:17440821).</text>
</comment>
<comment type="catalytic activity">
    <reaction evidence="4">
        <text>(2E)-geranyl diphosphate + H2O = (R)-linalool + diphosphate</text>
        <dbReference type="Rhea" id="RHEA:15809"/>
        <dbReference type="ChEBI" id="CHEBI:28"/>
        <dbReference type="ChEBI" id="CHEBI:15377"/>
        <dbReference type="ChEBI" id="CHEBI:33019"/>
        <dbReference type="ChEBI" id="CHEBI:58057"/>
        <dbReference type="EC" id="4.2.3.26"/>
    </reaction>
</comment>
<comment type="catalytic activity">
    <reaction evidence="4">
        <text>(2E,6E)-farnesyl diphosphate + H2O = (6E)-nerolidol + diphosphate</text>
        <dbReference type="Rhea" id="RHEA:56984"/>
        <dbReference type="ChEBI" id="CHEBI:15377"/>
        <dbReference type="ChEBI" id="CHEBI:33019"/>
        <dbReference type="ChEBI" id="CHEBI:141283"/>
        <dbReference type="ChEBI" id="CHEBI:175763"/>
    </reaction>
</comment>
<comment type="cofactor">
    <cofactor evidence="1">
        <name>Mg(2+)</name>
        <dbReference type="ChEBI" id="CHEBI:18420"/>
    </cofactor>
    <cofactor evidence="1">
        <name>Mn(2+)</name>
        <dbReference type="ChEBI" id="CHEBI:29035"/>
    </cofactor>
    <text evidence="1">Binds 3 Mg(2+) or Mn(2+) ions per subunit.</text>
</comment>
<comment type="pathway">
    <text evidence="7">Secondary metabolite biosynthesis; terpenoid biosynthesis.</text>
</comment>
<comment type="subcellular location">
    <subcellularLocation>
        <location evidence="3">Plastid</location>
        <location evidence="3">Chloroplast</location>
    </subcellularLocation>
</comment>
<comment type="tissue specificity">
    <text evidence="4">Highly expressed in young fruits and plant tops (PubMed:17440821). Expressed in flower buds and trichomes of petioles and stems (PubMed:17440821). Expressed at low levels in young leaves, stems, petioles, sepals and petals (PubMed:17440821).</text>
</comment>
<comment type="induction">
    <text evidence="4">Induced by spider mite feeding, wounding and jasmonate (JA).</text>
</comment>
<comment type="domain">
    <text evidence="7">The Asp-Asp-Xaa-Xaa-Asp/Glu (DDXXD/E) motif is important for the catalytic activity, presumably through binding to Mg(2+).</text>
</comment>
<comment type="similarity">
    <text evidence="7">Belongs to the terpene synthase family. Tpsb subfamily.</text>
</comment>
<accession>Q1XBU5</accession>
<accession>A0A3Q7ERH0</accession>
<name>TPS5_SOLLC</name>
<gene>
    <name evidence="6" type="primary">TPS5</name>
    <name evidence="5" type="synonym">MTS1</name>
    <name evidence="7" type="ordered locus">Solyc01g105890</name>
</gene>
<reference key="1">
    <citation type="journal article" date="2007" name="Plant Mol. Biol.">
        <title>Tomato linalool synthase is induced in trichomes by jasmonic acid.</title>
        <authorList>
            <person name="van Schie C.C."/>
            <person name="Haring M.A."/>
            <person name="Schuurink R.C."/>
        </authorList>
    </citation>
    <scope>NUCLEOTIDE SEQUENCE [MRNA]</scope>
    <scope>FUNCTION</scope>
    <scope>CATALYTIC ACTIVITY</scope>
    <scope>TISSUE SPECIFICITY</scope>
    <scope>INDUCTION</scope>
    <scope>DDXXD MOTIF</scope>
</reference>
<reference key="2">
    <citation type="journal article" date="2011" name="Plant Physiol.">
        <title>The tomato terpene synthase gene family.</title>
        <authorList>
            <person name="Falara V."/>
            <person name="Akhtar T.A."/>
            <person name="Nguyen T.T.H."/>
            <person name="Spyropoulou E.A."/>
            <person name="Bleeker P.M."/>
            <person name="Schauvinhold I."/>
            <person name="Matsuba Y."/>
            <person name="Bonini M.E."/>
            <person name="Schilmiller A.L."/>
            <person name="Last R.L."/>
            <person name="Schuurink R.C."/>
            <person name="Pichersky E."/>
        </authorList>
    </citation>
    <scope>NUCLEOTIDE SEQUENCE [GENOMIC DNA]</scope>
    <scope>GENE FAMILY</scope>
    <scope>NOMENCLATURE</scope>
</reference>
<reference key="3">
    <citation type="journal article" date="2012" name="Nature">
        <title>The tomato genome sequence provides insights into fleshy fruit evolution.</title>
        <authorList>
            <consortium name="Tomato Genome Consortium"/>
        </authorList>
    </citation>
    <scope>NUCLEOTIDE SEQUENCE [LARGE SCALE GENOMIC DNA]</scope>
    <source>
        <strain>cv. Heinz 1706</strain>
    </source>
</reference>
<protein>
    <recommendedName>
        <fullName evidence="7">(R)-linalool synthase TPS5, chloroplastic</fullName>
        <ecNumber evidence="4">4.2.3.26</ecNumber>
    </recommendedName>
    <alternativeName>
        <fullName evidence="5">Monoterpene synthase 1</fullName>
        <shortName evidence="5">LeMTS1</shortName>
    </alternativeName>
    <alternativeName>
        <fullName evidence="6">Terpenoid synthase 5</fullName>
    </alternativeName>
</protein>
<dbReference type="EC" id="4.2.3.26" evidence="4"/>
<dbReference type="EMBL" id="AY840091">
    <property type="protein sequence ID" value="AAX69063.1"/>
    <property type="molecule type" value="mRNA"/>
</dbReference>
<dbReference type="EMBL" id="JN408286">
    <property type="protein sequence ID" value="AEM05855.1"/>
    <property type="molecule type" value="Genomic_DNA"/>
</dbReference>
<dbReference type="EMBL" id="CM001064">
    <property type="status" value="NOT_ANNOTATED_CDS"/>
    <property type="molecule type" value="Genomic_DNA"/>
</dbReference>
<dbReference type="RefSeq" id="NP_001233805.1">
    <property type="nucleotide sequence ID" value="NM_001246876.3"/>
</dbReference>
<dbReference type="SMR" id="Q1XBU5"/>
<dbReference type="FunCoup" id="Q1XBU5">
    <property type="interactions" value="235"/>
</dbReference>
<dbReference type="STRING" id="4081.Q1XBU5"/>
<dbReference type="PaxDb" id="4081-Solyc01g105890.2.1"/>
<dbReference type="GeneID" id="778246"/>
<dbReference type="KEGG" id="sly:778246"/>
<dbReference type="eggNOG" id="ENOG502QUH3">
    <property type="taxonomic scope" value="Eukaryota"/>
</dbReference>
<dbReference type="HOGENOM" id="CLU_003125_7_1_1"/>
<dbReference type="InParanoid" id="Q1XBU5"/>
<dbReference type="OrthoDB" id="1936865at2759"/>
<dbReference type="PhylomeDB" id="Q1XBU5"/>
<dbReference type="BioCyc" id="MetaCyc:MONOMER2OL-32"/>
<dbReference type="BRENDA" id="4.2.3.26">
    <property type="organism ID" value="3101"/>
</dbReference>
<dbReference type="UniPathway" id="UPA00213"/>
<dbReference type="Proteomes" id="UP000004994">
    <property type="component" value="Unplaced"/>
</dbReference>
<dbReference type="ExpressionAtlas" id="Q1XBU5">
    <property type="expression patterns" value="baseline and differential"/>
</dbReference>
<dbReference type="GO" id="GO:0009507">
    <property type="term" value="C:chloroplast"/>
    <property type="evidence" value="ECO:0007669"/>
    <property type="project" value="UniProtKB-SubCell"/>
</dbReference>
<dbReference type="GO" id="GO:0000287">
    <property type="term" value="F:magnesium ion binding"/>
    <property type="evidence" value="ECO:0007669"/>
    <property type="project" value="InterPro"/>
</dbReference>
<dbReference type="GO" id="GO:0034008">
    <property type="term" value="F:R-linalool synthase activity"/>
    <property type="evidence" value="ECO:0007669"/>
    <property type="project" value="UniProtKB-EC"/>
</dbReference>
<dbReference type="GO" id="GO:0010333">
    <property type="term" value="F:terpene synthase activity"/>
    <property type="evidence" value="ECO:0007669"/>
    <property type="project" value="InterPro"/>
</dbReference>
<dbReference type="GO" id="GO:0016102">
    <property type="term" value="P:diterpenoid biosynthetic process"/>
    <property type="evidence" value="ECO:0007669"/>
    <property type="project" value="InterPro"/>
</dbReference>
<dbReference type="CDD" id="cd00684">
    <property type="entry name" value="Terpene_cyclase_plant_C1"/>
    <property type="match status" value="1"/>
</dbReference>
<dbReference type="FunFam" id="1.10.600.10:FF:000007">
    <property type="entry name" value="Isoprene synthase, chloroplastic"/>
    <property type="match status" value="1"/>
</dbReference>
<dbReference type="Gene3D" id="1.10.600.10">
    <property type="entry name" value="Farnesyl Diphosphate Synthase"/>
    <property type="match status" value="1"/>
</dbReference>
<dbReference type="Gene3D" id="1.50.10.130">
    <property type="entry name" value="Terpene synthase, N-terminal domain"/>
    <property type="match status" value="2"/>
</dbReference>
<dbReference type="InterPro" id="IPR008949">
    <property type="entry name" value="Isoprenoid_synthase_dom_sf"/>
</dbReference>
<dbReference type="InterPro" id="IPR034741">
    <property type="entry name" value="Terpene_cyclase-like_1_C"/>
</dbReference>
<dbReference type="InterPro" id="IPR044814">
    <property type="entry name" value="Terpene_cyclase_plant_C1"/>
</dbReference>
<dbReference type="InterPro" id="IPR001906">
    <property type="entry name" value="Terpene_synth_N"/>
</dbReference>
<dbReference type="InterPro" id="IPR036965">
    <property type="entry name" value="Terpene_synth_N_sf"/>
</dbReference>
<dbReference type="InterPro" id="IPR050148">
    <property type="entry name" value="Terpene_synthase-like"/>
</dbReference>
<dbReference type="InterPro" id="IPR005630">
    <property type="entry name" value="Terpene_synthase_metal-bd"/>
</dbReference>
<dbReference type="InterPro" id="IPR008930">
    <property type="entry name" value="Terpenoid_cyclase/PrenylTrfase"/>
</dbReference>
<dbReference type="PANTHER" id="PTHR31225:SF83">
    <property type="entry name" value="(R)-LINALOOL SYNTHASE TPS5, CHLOROPLASTIC"/>
    <property type="match status" value="1"/>
</dbReference>
<dbReference type="PANTHER" id="PTHR31225">
    <property type="entry name" value="OS04G0344100 PROTEIN-RELATED"/>
    <property type="match status" value="1"/>
</dbReference>
<dbReference type="Pfam" id="PF01397">
    <property type="entry name" value="Terpene_synth"/>
    <property type="match status" value="1"/>
</dbReference>
<dbReference type="Pfam" id="PF03936">
    <property type="entry name" value="Terpene_synth_C"/>
    <property type="match status" value="1"/>
</dbReference>
<dbReference type="SFLD" id="SFLDS00005">
    <property type="entry name" value="Isoprenoid_Synthase_Type_I"/>
    <property type="match status" value="1"/>
</dbReference>
<dbReference type="SFLD" id="SFLDG01019">
    <property type="entry name" value="Terpene_Cyclase_Like_1_C_Termi"/>
    <property type="match status" value="1"/>
</dbReference>
<dbReference type="SUPFAM" id="SSF48239">
    <property type="entry name" value="Terpenoid cyclases/Protein prenyltransferases"/>
    <property type="match status" value="2"/>
</dbReference>
<dbReference type="SUPFAM" id="SSF48576">
    <property type="entry name" value="Terpenoid synthases"/>
    <property type="match status" value="1"/>
</dbReference>
<feature type="transit peptide" description="Chloroplast" evidence="3">
    <location>
        <begin position="1"/>
        <end position="42"/>
    </location>
</feature>
<feature type="chain" id="PRO_0000447554" description="(R)-linalool synthase TPS5, chloroplastic">
    <location>
        <begin position="43"/>
        <end position="609"/>
    </location>
</feature>
<feature type="short sequence motif" description="DDXXD motif" evidence="8">
    <location>
        <begin position="362"/>
        <end position="366"/>
    </location>
</feature>
<feature type="binding site" evidence="2">
    <location>
        <position position="325"/>
    </location>
    <ligand>
        <name>(2E)-geranyl diphosphate</name>
        <dbReference type="ChEBI" id="CHEBI:58057"/>
    </ligand>
</feature>
<feature type="binding site" evidence="2">
    <location>
        <position position="362"/>
    </location>
    <ligand>
        <name>(2E)-geranyl diphosphate</name>
        <dbReference type="ChEBI" id="CHEBI:58057"/>
    </ligand>
</feature>
<feature type="binding site" evidence="2">
    <location>
        <position position="362"/>
    </location>
    <ligand>
        <name>Mg(2+)</name>
        <dbReference type="ChEBI" id="CHEBI:18420"/>
        <label>1</label>
    </ligand>
</feature>
<feature type="binding site" evidence="2">
    <location>
        <position position="362"/>
    </location>
    <ligand>
        <name>Mg(2+)</name>
        <dbReference type="ChEBI" id="CHEBI:18420"/>
        <label>2</label>
    </ligand>
</feature>
<feature type="binding site" evidence="2">
    <location>
        <position position="366"/>
    </location>
    <ligand>
        <name>(2E)-geranyl diphosphate</name>
        <dbReference type="ChEBI" id="CHEBI:58057"/>
    </ligand>
</feature>
<feature type="binding site" evidence="2">
    <location>
        <position position="366"/>
    </location>
    <ligand>
        <name>Mg(2+)</name>
        <dbReference type="ChEBI" id="CHEBI:18420"/>
        <label>1</label>
    </ligand>
</feature>
<feature type="binding site" evidence="2">
    <location>
        <position position="366"/>
    </location>
    <ligand>
        <name>Mg(2+)</name>
        <dbReference type="ChEBI" id="CHEBI:18420"/>
        <label>2</label>
    </ligand>
</feature>
<feature type="binding site" evidence="2">
    <location>
        <position position="503"/>
    </location>
    <ligand>
        <name>(2E)-geranyl diphosphate</name>
        <dbReference type="ChEBI" id="CHEBI:58057"/>
    </ligand>
</feature>
<feature type="binding site" evidence="2">
    <location>
        <position position="506"/>
    </location>
    <ligand>
        <name>(2E)-geranyl diphosphate</name>
        <dbReference type="ChEBI" id="CHEBI:58057"/>
    </ligand>
</feature>
<feature type="binding site" evidence="2">
    <location>
        <position position="506"/>
    </location>
    <ligand>
        <name>Mg(2+)</name>
        <dbReference type="ChEBI" id="CHEBI:18420"/>
        <label>3</label>
    </ligand>
</feature>
<feature type="binding site" evidence="2">
    <location>
        <position position="510"/>
    </location>
    <ligand>
        <name>Mg(2+)</name>
        <dbReference type="ChEBI" id="CHEBI:18420"/>
        <label>3</label>
    </ligand>
</feature>
<feature type="binding site" evidence="2">
    <location>
        <position position="514"/>
    </location>
    <ligand>
        <name>Mg(2+)</name>
        <dbReference type="ChEBI" id="CHEBI:18420"/>
        <label>3</label>
    </ligand>
</feature>
<evidence type="ECO:0000250" key="1">
    <source>
        <dbReference type="UniProtKB" id="A0A1C9J6A7"/>
    </source>
</evidence>
<evidence type="ECO:0000250" key="2">
    <source>
        <dbReference type="UniProtKB" id="Q40577"/>
    </source>
</evidence>
<evidence type="ECO:0000255" key="3"/>
<evidence type="ECO:0000269" key="4">
    <source>
    </source>
</evidence>
<evidence type="ECO:0000303" key="5">
    <source>
    </source>
</evidence>
<evidence type="ECO:0000303" key="6">
    <source>
    </source>
</evidence>
<evidence type="ECO:0000305" key="7"/>
<evidence type="ECO:0000305" key="8">
    <source>
    </source>
</evidence>
<proteinExistence type="evidence at protein level"/>
<organism>
    <name type="scientific">Solanum lycopersicum</name>
    <name type="common">Tomato</name>
    <name type="synonym">Lycopersicon esculentum</name>
    <dbReference type="NCBI Taxonomy" id="4081"/>
    <lineage>
        <taxon>Eukaryota</taxon>
        <taxon>Viridiplantae</taxon>
        <taxon>Streptophyta</taxon>
        <taxon>Embryophyta</taxon>
        <taxon>Tracheophyta</taxon>
        <taxon>Spermatophyta</taxon>
        <taxon>Magnoliopsida</taxon>
        <taxon>eudicotyledons</taxon>
        <taxon>Gunneridae</taxon>
        <taxon>Pentapetalae</taxon>
        <taxon>asterids</taxon>
        <taxon>lamiids</taxon>
        <taxon>Solanales</taxon>
        <taxon>Solanaceae</taxon>
        <taxon>Solanoideae</taxon>
        <taxon>Solaneae</taxon>
        <taxon>Solanum</taxon>
        <taxon>Solanum subgen. Lycopersicon</taxon>
    </lineage>
</organism>
<keyword id="KW-0150">Chloroplast</keyword>
<keyword id="KW-0456">Lyase</keyword>
<keyword id="KW-0460">Magnesium</keyword>
<keyword id="KW-0464">Manganese</keyword>
<keyword id="KW-0479">Metal-binding</keyword>
<keyword id="KW-0934">Plastid</keyword>
<keyword id="KW-1185">Reference proteome</keyword>
<keyword id="KW-0809">Transit peptide</keyword>